<keyword id="KW-1015">Disulfide bond</keyword>
<keyword id="KW-0325">Glycoprotein</keyword>
<keyword id="KW-0378">Hydrolase</keyword>
<keyword id="KW-0472">Membrane</keyword>
<keyword id="KW-0520">NAD</keyword>
<keyword id="KW-0521">NADP</keyword>
<keyword id="KW-0675">Receptor</keyword>
<keyword id="KW-1185">Reference proteome</keyword>
<keyword id="KW-0735">Signal-anchor</keyword>
<keyword id="KW-0808">Transferase</keyword>
<keyword id="KW-0812">Transmembrane</keyword>
<keyword id="KW-1133">Transmembrane helix</keyword>
<protein>
    <recommendedName>
        <fullName evidence="5">ADP-ribosyl cyclase/cyclic ADP-ribose hydrolase 1</fullName>
        <ecNumber evidence="7">3.2.2.-</ecNumber>
        <ecNumber>3.2.2.6</ecNumber>
    </recommendedName>
    <alternativeName>
        <fullName>2'-phospho-ADP-ribosyl cyclase</fullName>
    </alternativeName>
    <alternativeName>
        <fullName>2'-phospho-ADP-ribosyl cyclase/2'-phospho-cyclic-ADP-ribose transferase</fullName>
        <ecNumber>2.4.99.20</ecNumber>
    </alternativeName>
    <alternativeName>
        <fullName>2'-phospho-cyclic-ADP-ribose transferase</fullName>
    </alternativeName>
    <alternativeName>
        <fullName>ADP-ribosyl cyclase 1</fullName>
        <shortName>ADPRC 1</shortName>
    </alternativeName>
    <alternativeName>
        <fullName>Cyclic ADP-ribose hydrolase 1</fullName>
        <shortName>cADPR hydrolase 1</shortName>
    </alternativeName>
    <cdAntigenName>CD38</cdAntigenName>
</protein>
<feature type="chain" id="PRO_0000144067" description="ADP-ribosyl cyclase/cyclic ADP-ribose hydrolase 1">
    <location>
        <begin position="1"/>
        <end position="301"/>
    </location>
</feature>
<feature type="topological domain" description="Cytoplasmic" evidence="3">
    <location>
        <begin position="1"/>
        <end position="21"/>
    </location>
</feature>
<feature type="transmembrane region" description="Helical; Signal-anchor for type II membrane protein" evidence="3">
    <location>
        <begin position="22"/>
        <end position="43"/>
    </location>
</feature>
<feature type="topological domain" description="Extracellular" evidence="3">
    <location>
        <begin position="44"/>
        <end position="301"/>
    </location>
</feature>
<feature type="active site" evidence="1">
    <location>
        <position position="120"/>
    </location>
</feature>
<feature type="active site" evidence="1">
    <location>
        <position position="202"/>
    </location>
</feature>
<feature type="glycosylation site" description="N-linked (GlcNAc...) asparagine" evidence="3">
    <location>
        <position position="101"/>
    </location>
</feature>
<feature type="glycosylation site" description="N-linked (GlcNAc...) asparagine" evidence="3">
    <location>
        <position position="121"/>
    </location>
</feature>
<feature type="glycosylation site" description="N-linked (GlcNAc...) asparagine" evidence="3">
    <location>
        <position position="210"/>
    </location>
</feature>
<feature type="glycosylation site" description="N-linked (GlcNAc...) asparagine" evidence="3">
    <location>
        <position position="220"/>
    </location>
</feature>
<feature type="disulfide bond" evidence="1">
    <location>
        <begin position="68"/>
        <end position="83"/>
    </location>
</feature>
<feature type="disulfide bond" evidence="1">
    <location>
        <begin position="100"/>
        <end position="181"/>
    </location>
</feature>
<feature type="disulfide bond" evidence="1">
    <location>
        <begin position="161"/>
        <end position="174"/>
    </location>
</feature>
<feature type="disulfide bond" evidence="1">
    <location>
        <begin position="255"/>
        <end position="276"/>
    </location>
</feature>
<feature type="disulfide bond" evidence="1">
    <location>
        <begin position="288"/>
        <end position="297"/>
    </location>
</feature>
<sequence length="301" mass="34422">MANCEFSPVSGDKPCCRLSRRAQVCLGVCLLVLLILVVVVAVVLPRWRQQWSGSGTTSRFPETVLARCVKYTEVHPEMRHVDCQSVWDAFKGAFISKYPCNITEEDYQPLVKLGTQTVPCNKTLLWSRIKDLAHQFTQVQRDMFTLEDMLLGYLADDLTWCGEFNTFEINYQSCPDWRKDCSNNPVSVFWKTVSRRFAETACGVVHVMLNGSRSKIFDKNSTFGSVEVHNLQPEKVQALEAWVIHGGREDSRDLCQDPTIKELESIISKRNIRFFCKNIYRPDKFLQCVKNPEDSSCLSGI</sequence>
<accession>Q5VAN0</accession>
<organism>
    <name type="scientific">Macaca fascicularis</name>
    <name type="common">Crab-eating macaque</name>
    <name type="synonym">Cynomolgus monkey</name>
    <dbReference type="NCBI Taxonomy" id="9541"/>
    <lineage>
        <taxon>Eukaryota</taxon>
        <taxon>Metazoa</taxon>
        <taxon>Chordata</taxon>
        <taxon>Craniata</taxon>
        <taxon>Vertebrata</taxon>
        <taxon>Euteleostomi</taxon>
        <taxon>Mammalia</taxon>
        <taxon>Eutheria</taxon>
        <taxon>Euarchontoglires</taxon>
        <taxon>Primates</taxon>
        <taxon>Haplorrhini</taxon>
        <taxon>Catarrhini</taxon>
        <taxon>Cercopithecidae</taxon>
        <taxon>Cercopithecinae</taxon>
        <taxon>Macaca</taxon>
    </lineage>
</organism>
<comment type="function">
    <text evidence="2 7">Synthesizes cyclic ADP-ribose (cADPR), a second messenger for glucose-induced insulin secretion (Probable). Synthesizes the Ca(2+) mobilizer nicotinate-adenine dinucleotide phosphate, NAADP(+), from 2'-phospho-cADPR and nicotinic acid, as well as from NADP(+) and nicotinic acid. Also has cADPR hydrolase activity (By similarity).</text>
</comment>
<comment type="catalytic activity">
    <reaction evidence="7">
        <text>NAD(+) = cyclic ADP-beta-D-ribose + nicotinamide + H(+)</text>
        <dbReference type="Rhea" id="RHEA:38611"/>
        <dbReference type="ChEBI" id="CHEBI:15378"/>
        <dbReference type="ChEBI" id="CHEBI:17154"/>
        <dbReference type="ChEBI" id="CHEBI:57540"/>
        <dbReference type="ChEBI" id="CHEBI:73672"/>
    </reaction>
    <physiologicalReaction direction="left-to-right" evidence="7">
        <dbReference type="Rhea" id="RHEA:38612"/>
    </physiologicalReaction>
</comment>
<comment type="catalytic activity">
    <reaction evidence="2">
        <text>2'-phospho-cyclic ADP-ribose + nicotinate = nicotinate-adenine dinucleotide phosphate</text>
        <dbReference type="Rhea" id="RHEA:38607"/>
        <dbReference type="ChEBI" id="CHEBI:32544"/>
        <dbReference type="ChEBI" id="CHEBI:75967"/>
        <dbReference type="ChEBI" id="CHEBI:75970"/>
    </reaction>
</comment>
<comment type="catalytic activity">
    <reaction>
        <text>NAD(+) + H2O = ADP-D-ribose + nicotinamide + H(+)</text>
        <dbReference type="Rhea" id="RHEA:16301"/>
        <dbReference type="ChEBI" id="CHEBI:15377"/>
        <dbReference type="ChEBI" id="CHEBI:15378"/>
        <dbReference type="ChEBI" id="CHEBI:17154"/>
        <dbReference type="ChEBI" id="CHEBI:57540"/>
        <dbReference type="ChEBI" id="CHEBI:57967"/>
        <dbReference type="EC" id="3.2.2.6"/>
    </reaction>
</comment>
<comment type="catalytic activity">
    <reaction evidence="2">
        <text>nicotinate + NADP(+) = nicotinate-adenine dinucleotide phosphate + nicotinamide</text>
        <dbReference type="Rhea" id="RHEA:38599"/>
        <dbReference type="ChEBI" id="CHEBI:17154"/>
        <dbReference type="ChEBI" id="CHEBI:32544"/>
        <dbReference type="ChEBI" id="CHEBI:58349"/>
        <dbReference type="ChEBI" id="CHEBI:75967"/>
        <dbReference type="EC" id="2.4.99.20"/>
    </reaction>
</comment>
<comment type="activity regulation">
    <text evidence="2">ATP inhibits the cADPR hydrolyzing activity.</text>
</comment>
<comment type="subunit">
    <text evidence="2">Homodimer.</text>
</comment>
<comment type="subcellular location">
    <subcellularLocation>
        <location evidence="4">Cell surface</location>
    </subcellularLocation>
    <subcellularLocation>
        <location evidence="1">Membrane</location>
        <topology evidence="1">Single-pass type II membrane protein</topology>
    </subcellularLocation>
</comment>
<comment type="similarity">
    <text evidence="6">Belongs to the ADP-ribosyl cyclase family.</text>
</comment>
<evidence type="ECO:0000250" key="1"/>
<evidence type="ECO:0000250" key="2">
    <source>
        <dbReference type="UniProtKB" id="P28907"/>
    </source>
</evidence>
<evidence type="ECO:0000255" key="3"/>
<evidence type="ECO:0000269" key="4">
    <source>
    </source>
</evidence>
<evidence type="ECO:0000303" key="5">
    <source>
    </source>
</evidence>
<evidence type="ECO:0000305" key="6"/>
<evidence type="ECO:0000305" key="7">
    <source>
    </source>
</evidence>
<name>CD38_MACFA</name>
<dbReference type="EC" id="3.2.2.-" evidence="7"/>
<dbReference type="EC" id="3.2.2.6"/>
<dbReference type="EC" id="2.4.99.20"/>
<dbReference type="EMBL" id="AY555148">
    <property type="protein sequence ID" value="AAT36330.1"/>
    <property type="molecule type" value="mRNA"/>
</dbReference>
<dbReference type="RefSeq" id="NP_001274206.1">
    <property type="nucleotide sequence ID" value="NM_001287277.1"/>
</dbReference>
<dbReference type="RefSeq" id="XP_045248103.1">
    <property type="nucleotide sequence ID" value="XM_045392168.2"/>
</dbReference>
<dbReference type="SMR" id="Q5VAN0"/>
<dbReference type="STRING" id="9541.ENSMFAP00000003193"/>
<dbReference type="GlyCosmos" id="Q5VAN0">
    <property type="glycosylation" value="4 sites, No reported glycans"/>
</dbReference>
<dbReference type="ABCD" id="Q5VAN0">
    <property type="antibodies" value="1 sequenced antibody"/>
</dbReference>
<dbReference type="Ensembl" id="ENSMFAT00000026853.2">
    <property type="protein sequence ID" value="ENSMFAP00000003193.1"/>
    <property type="gene ID" value="ENSMFAG00000034115.2"/>
</dbReference>
<dbReference type="GeneID" id="102126394"/>
<dbReference type="VEuPathDB" id="HostDB:ENSMFAG00000034115"/>
<dbReference type="eggNOG" id="ENOG502S1HV">
    <property type="taxonomic scope" value="Eukaryota"/>
</dbReference>
<dbReference type="GeneTree" id="ENSGT00390000017291"/>
<dbReference type="OMA" id="SCQTCAN"/>
<dbReference type="Proteomes" id="UP000233100">
    <property type="component" value="Chromosome 5"/>
</dbReference>
<dbReference type="Bgee" id="ENSMFAG00000034115">
    <property type="expression patterns" value="Expressed in thymus and 13 other cell types or tissues"/>
</dbReference>
<dbReference type="GO" id="GO:0009986">
    <property type="term" value="C:cell surface"/>
    <property type="evidence" value="ECO:0007669"/>
    <property type="project" value="UniProtKB-SubCell"/>
</dbReference>
<dbReference type="GO" id="GO:0005886">
    <property type="term" value="C:plasma membrane"/>
    <property type="evidence" value="ECO:0007669"/>
    <property type="project" value="Ensembl"/>
</dbReference>
<dbReference type="GO" id="GO:0042802">
    <property type="term" value="F:identical protein binding"/>
    <property type="evidence" value="ECO:0007669"/>
    <property type="project" value="Ensembl"/>
</dbReference>
<dbReference type="GO" id="GO:0061809">
    <property type="term" value="F:NAD+ nucleosidase activity, cyclic ADP-ribose generating"/>
    <property type="evidence" value="ECO:0007669"/>
    <property type="project" value="UniProtKB-EC"/>
</dbReference>
<dbReference type="GO" id="GO:0016849">
    <property type="term" value="F:phosphorus-oxygen lyase activity"/>
    <property type="evidence" value="ECO:0007669"/>
    <property type="project" value="Ensembl"/>
</dbReference>
<dbReference type="GO" id="GO:0016740">
    <property type="term" value="F:transferase activity"/>
    <property type="evidence" value="ECO:0007669"/>
    <property type="project" value="UniProtKB-KW"/>
</dbReference>
<dbReference type="GO" id="GO:0042100">
    <property type="term" value="P:B cell proliferation"/>
    <property type="evidence" value="ECO:0007669"/>
    <property type="project" value="Ensembl"/>
</dbReference>
<dbReference type="GO" id="GO:0050853">
    <property type="term" value="P:B cell receptor signaling pathway"/>
    <property type="evidence" value="ECO:0007669"/>
    <property type="project" value="Ensembl"/>
</dbReference>
<dbReference type="GO" id="GO:0043066">
    <property type="term" value="P:negative regulation of apoptotic process"/>
    <property type="evidence" value="ECO:0007669"/>
    <property type="project" value="Ensembl"/>
</dbReference>
<dbReference type="GO" id="GO:0045892">
    <property type="term" value="P:negative regulation of DNA-templated transcription"/>
    <property type="evidence" value="ECO:0007669"/>
    <property type="project" value="Ensembl"/>
</dbReference>
<dbReference type="GO" id="GO:0030890">
    <property type="term" value="P:positive regulation of B cell proliferation"/>
    <property type="evidence" value="ECO:0007669"/>
    <property type="project" value="Ensembl"/>
</dbReference>
<dbReference type="GO" id="GO:0045893">
    <property type="term" value="P:positive regulation of DNA-templated transcription"/>
    <property type="evidence" value="ECO:0007669"/>
    <property type="project" value="Ensembl"/>
</dbReference>
<dbReference type="GO" id="GO:0009410">
    <property type="term" value="P:response to xenobiotic stimulus"/>
    <property type="evidence" value="ECO:0007669"/>
    <property type="project" value="Ensembl"/>
</dbReference>
<dbReference type="CDD" id="cd04759">
    <property type="entry name" value="Rib_hydrolase"/>
    <property type="match status" value="1"/>
</dbReference>
<dbReference type="Gene3D" id="1.20.82.10">
    <property type="entry name" value="ADP Ribosyl Cyclase, Chain A, domain 1"/>
    <property type="match status" value="1"/>
</dbReference>
<dbReference type="Gene3D" id="3.40.50.720">
    <property type="entry name" value="NAD(P)-binding Rossmann-like Domain"/>
    <property type="match status" value="1"/>
</dbReference>
<dbReference type="InterPro" id="IPR003193">
    <property type="entry name" value="ADP-ribosyl_cyclase"/>
</dbReference>
<dbReference type="PANTHER" id="PTHR10912">
    <property type="entry name" value="ADP-RIBOSYL CYCLASE"/>
    <property type="match status" value="1"/>
</dbReference>
<dbReference type="PANTHER" id="PTHR10912:SF5">
    <property type="entry name" value="ADP-RIBOSYL CYCLASE_CYCLIC ADP-RIBOSE HYDROLASE 1"/>
    <property type="match status" value="1"/>
</dbReference>
<dbReference type="Pfam" id="PF02267">
    <property type="entry name" value="Rib_hydrolayse"/>
    <property type="match status" value="1"/>
</dbReference>
<dbReference type="SUPFAM" id="SSF52309">
    <property type="entry name" value="N-(deoxy)ribosyltransferase-like"/>
    <property type="match status" value="1"/>
</dbReference>
<gene>
    <name type="primary">CD38</name>
</gene>
<reference key="1">
    <citation type="journal article" date="2004" name="BMC Immunol.">
        <title>Characterization and phylogenetic epitope mapping of CD38 ADPR cyclase in the cynomolgus macaque.</title>
        <authorList>
            <person name="Ferrero E."/>
            <person name="Orciani M."/>
            <person name="Vacca P."/>
            <person name="Ortolan E."/>
            <person name="Crovella S."/>
            <person name="Titti F."/>
            <person name="Saccucci F."/>
            <person name="Malavasi F."/>
        </authorList>
    </citation>
    <scope>NUCLEOTIDE SEQUENCE [MRNA]</scope>
    <scope>FUNCTION</scope>
    <scope>CATALYTIC ACTIVITY</scope>
    <scope>SUBCELLULAR LOCATION</scope>
</reference>
<proteinExistence type="evidence at protein level"/>